<feature type="chain" id="PRO_0000300044" description="Photosystem I P700 chlorophyll a apoprotein A2">
    <location>
        <begin position="1"/>
        <end position="734"/>
    </location>
</feature>
<feature type="transmembrane region" description="Helical; Name=I" evidence="1">
    <location>
        <begin position="46"/>
        <end position="69"/>
    </location>
</feature>
<feature type="transmembrane region" description="Helical; Name=II" evidence="1">
    <location>
        <begin position="135"/>
        <end position="158"/>
    </location>
</feature>
<feature type="transmembrane region" description="Helical; Name=III" evidence="1">
    <location>
        <begin position="175"/>
        <end position="199"/>
    </location>
</feature>
<feature type="transmembrane region" description="Helical; Name=IV" evidence="1">
    <location>
        <begin position="273"/>
        <end position="291"/>
    </location>
</feature>
<feature type="transmembrane region" description="Helical; Name=V" evidence="1">
    <location>
        <begin position="330"/>
        <end position="353"/>
    </location>
</feature>
<feature type="transmembrane region" description="Helical; Name=VI" evidence="1">
    <location>
        <begin position="369"/>
        <end position="395"/>
    </location>
</feature>
<feature type="transmembrane region" description="Helical; Name=VII" evidence="1">
    <location>
        <begin position="417"/>
        <end position="439"/>
    </location>
</feature>
<feature type="transmembrane region" description="Helical; Name=VIII" evidence="1">
    <location>
        <begin position="517"/>
        <end position="535"/>
    </location>
</feature>
<feature type="transmembrane region" description="Helical; Name=IX" evidence="1">
    <location>
        <begin position="575"/>
        <end position="596"/>
    </location>
</feature>
<feature type="transmembrane region" description="Helical; Name=X" evidence="1">
    <location>
        <begin position="643"/>
        <end position="665"/>
    </location>
</feature>
<feature type="transmembrane region" description="Helical; Name=XI" evidence="1">
    <location>
        <begin position="707"/>
        <end position="727"/>
    </location>
</feature>
<feature type="binding site" evidence="1">
    <location>
        <position position="559"/>
    </location>
    <ligand>
        <name>[4Fe-4S] cluster</name>
        <dbReference type="ChEBI" id="CHEBI:49883"/>
        <note>ligand shared between dimeric partners</note>
    </ligand>
</feature>
<feature type="binding site" evidence="1">
    <location>
        <position position="568"/>
    </location>
    <ligand>
        <name>[4Fe-4S] cluster</name>
        <dbReference type="ChEBI" id="CHEBI:49883"/>
        <note>ligand shared between dimeric partners</note>
    </ligand>
</feature>
<feature type="binding site" description="axial binding residue" evidence="1">
    <location>
        <position position="654"/>
    </location>
    <ligand>
        <name>chlorophyll a</name>
        <dbReference type="ChEBI" id="CHEBI:58416"/>
        <label>B1</label>
    </ligand>
    <ligandPart>
        <name>Mg</name>
        <dbReference type="ChEBI" id="CHEBI:25107"/>
    </ligandPart>
</feature>
<feature type="binding site" description="axial binding residue" evidence="1">
    <location>
        <position position="662"/>
    </location>
    <ligand>
        <name>chlorophyll a</name>
        <dbReference type="ChEBI" id="CHEBI:58416"/>
        <label>B3</label>
    </ligand>
    <ligandPart>
        <name>Mg</name>
        <dbReference type="ChEBI" id="CHEBI:25107"/>
    </ligandPart>
</feature>
<feature type="binding site" evidence="1">
    <location>
        <position position="670"/>
    </location>
    <ligand>
        <name>chlorophyll a</name>
        <dbReference type="ChEBI" id="CHEBI:58416"/>
        <label>B3</label>
    </ligand>
</feature>
<feature type="binding site" evidence="1">
    <location>
        <position position="671"/>
    </location>
    <ligand>
        <name>phylloquinone</name>
        <dbReference type="ChEBI" id="CHEBI:18067"/>
        <label>B</label>
    </ligand>
</feature>
<protein>
    <recommendedName>
        <fullName evidence="1">Photosystem I P700 chlorophyll a apoprotein A2</fullName>
        <ecNumber evidence="1">1.97.1.12</ecNumber>
    </recommendedName>
    <alternativeName>
        <fullName evidence="1">PSI-B</fullName>
    </alternativeName>
    <alternativeName>
        <fullName evidence="1">PsaB</fullName>
    </alternativeName>
</protein>
<geneLocation type="chloroplast"/>
<sequence>MALRFPRFSQGLAQDPTTRRIWFGIATAHDFESHDDITEERLYQNIFASHFGQLAIIFLWTSGNLFHVAWQGNFETWIQDPLHVRPIAHAIWDPHFGQPAVEAFTRGGALGPVNIAYSGVYQWWYTIGLRTNEDLYTGALFLLFLSALSLIGGWLHLQPKWKPRVSWFKNAESRLNHHLSGLFGVSSLAWTGHLVHVAIPASRGEYVRWNNFLNVLPHPQGLGPLFTGQWNLYAQNPDSSSHLFGTSQGSGTAILTLLGGFHPQTQSLWLTDMAHHHLAIAILFLIAGHMYRTNFGIGHSIKDLLEAHIPPGGRLGRGHKGLYDTINNSIHFQLGLALASLGVITSLVAQHMYSLPAYAFIAQDFTTQAALYTHHQYIAGFIMTGAFAHGAIFFIRDYNPEQNEDNVLARMLDHKEAIISQLSWASLFLGFHTLGLYVHNDVMLAFGTSEKQILIEPIFAQWIQSAHGKTSYGFDVLLSSTNGPAFNAGRSIWLPGWLNAINENSNSLFLTIGPGDFLVHHAIALGLHTTTLILVKGALDARGSKLMPDKKDFGYSFPCDGPGRGGTCDISAWDAFYLAVFWMLNTIGWVTFYWHWKHITLWQGNVSQFNESSTYLMGWLRDYLWLNSSQLINGYNPFGMNSLSVWAWMFLFGHLVWATGFMFLISWRGYWQELIETLAWAHERTPLANLIRWKDKPVALSIVQARLVGLAHFSVGYIFTYAAFLIASTSGKFG</sequence>
<accession>A4QL18</accession>
<name>PSAB_DRANE</name>
<reference key="1">
    <citation type="submission" date="2007-03" db="EMBL/GenBank/DDBJ databases">
        <title>Sequencing analysis of Draba nemoroza chloroplast DNA.</title>
        <authorList>
            <person name="Hosouchi T."/>
            <person name="Tsuruoka H."/>
            <person name="Kotani H."/>
        </authorList>
    </citation>
    <scope>NUCLEOTIDE SEQUENCE [LARGE SCALE GENOMIC DNA]</scope>
</reference>
<proteinExistence type="inferred from homology"/>
<organism>
    <name type="scientific">Draba nemorosa</name>
    <name type="common">Woodland whitlowgrass</name>
    <dbReference type="NCBI Taxonomy" id="171822"/>
    <lineage>
        <taxon>Eukaryota</taxon>
        <taxon>Viridiplantae</taxon>
        <taxon>Streptophyta</taxon>
        <taxon>Embryophyta</taxon>
        <taxon>Tracheophyta</taxon>
        <taxon>Spermatophyta</taxon>
        <taxon>Magnoliopsida</taxon>
        <taxon>eudicotyledons</taxon>
        <taxon>Gunneridae</taxon>
        <taxon>Pentapetalae</taxon>
        <taxon>rosids</taxon>
        <taxon>malvids</taxon>
        <taxon>Brassicales</taxon>
        <taxon>Brassicaceae</taxon>
        <taxon>Arabideae</taxon>
        <taxon>Draba</taxon>
    </lineage>
</organism>
<dbReference type="EC" id="1.97.1.12" evidence="1"/>
<dbReference type="EMBL" id="AP009373">
    <property type="protein sequence ID" value="BAF50373.1"/>
    <property type="molecule type" value="Genomic_DNA"/>
</dbReference>
<dbReference type="RefSeq" id="YP_001123549.1">
    <property type="nucleotide sequence ID" value="NC_009272.1"/>
</dbReference>
<dbReference type="SMR" id="A4QL18"/>
<dbReference type="GeneID" id="4964793"/>
<dbReference type="GO" id="GO:0009535">
    <property type="term" value="C:chloroplast thylakoid membrane"/>
    <property type="evidence" value="ECO:0007669"/>
    <property type="project" value="UniProtKB-SubCell"/>
</dbReference>
<dbReference type="GO" id="GO:0009522">
    <property type="term" value="C:photosystem I"/>
    <property type="evidence" value="ECO:0007669"/>
    <property type="project" value="UniProtKB-KW"/>
</dbReference>
<dbReference type="GO" id="GO:0051539">
    <property type="term" value="F:4 iron, 4 sulfur cluster binding"/>
    <property type="evidence" value="ECO:0007669"/>
    <property type="project" value="UniProtKB-KW"/>
</dbReference>
<dbReference type="GO" id="GO:0016168">
    <property type="term" value="F:chlorophyll binding"/>
    <property type="evidence" value="ECO:0007669"/>
    <property type="project" value="UniProtKB-KW"/>
</dbReference>
<dbReference type="GO" id="GO:0009055">
    <property type="term" value="F:electron transfer activity"/>
    <property type="evidence" value="ECO:0007669"/>
    <property type="project" value="UniProtKB-UniRule"/>
</dbReference>
<dbReference type="GO" id="GO:0000287">
    <property type="term" value="F:magnesium ion binding"/>
    <property type="evidence" value="ECO:0007669"/>
    <property type="project" value="UniProtKB-UniRule"/>
</dbReference>
<dbReference type="GO" id="GO:0016491">
    <property type="term" value="F:oxidoreductase activity"/>
    <property type="evidence" value="ECO:0007669"/>
    <property type="project" value="UniProtKB-KW"/>
</dbReference>
<dbReference type="GO" id="GO:0015979">
    <property type="term" value="P:photosynthesis"/>
    <property type="evidence" value="ECO:0007669"/>
    <property type="project" value="UniProtKB-UniRule"/>
</dbReference>
<dbReference type="FunFam" id="1.20.1130.10:FF:000001">
    <property type="entry name" value="Photosystem I P700 chlorophyll a apoprotein A2"/>
    <property type="match status" value="1"/>
</dbReference>
<dbReference type="Gene3D" id="1.20.1130.10">
    <property type="entry name" value="Photosystem I PsaA/PsaB"/>
    <property type="match status" value="1"/>
</dbReference>
<dbReference type="HAMAP" id="MF_00482">
    <property type="entry name" value="PSI_PsaB"/>
    <property type="match status" value="1"/>
</dbReference>
<dbReference type="InterPro" id="IPR001280">
    <property type="entry name" value="PSI_PsaA/B"/>
</dbReference>
<dbReference type="InterPro" id="IPR020586">
    <property type="entry name" value="PSI_PsaA/B_CS"/>
</dbReference>
<dbReference type="InterPro" id="IPR036408">
    <property type="entry name" value="PSI_PsaA/B_sf"/>
</dbReference>
<dbReference type="InterPro" id="IPR006244">
    <property type="entry name" value="PSI_PsaB"/>
</dbReference>
<dbReference type="NCBIfam" id="TIGR01336">
    <property type="entry name" value="psaB"/>
    <property type="match status" value="1"/>
</dbReference>
<dbReference type="PANTHER" id="PTHR30128">
    <property type="entry name" value="OUTER MEMBRANE PROTEIN, OMPA-RELATED"/>
    <property type="match status" value="1"/>
</dbReference>
<dbReference type="PANTHER" id="PTHR30128:SF19">
    <property type="entry name" value="PHOTOSYSTEM I P700 CHLOROPHYLL A APOPROTEIN A1-RELATED"/>
    <property type="match status" value="1"/>
</dbReference>
<dbReference type="Pfam" id="PF00223">
    <property type="entry name" value="PsaA_PsaB"/>
    <property type="match status" value="1"/>
</dbReference>
<dbReference type="PIRSF" id="PIRSF002905">
    <property type="entry name" value="PSI_A"/>
    <property type="match status" value="1"/>
</dbReference>
<dbReference type="PRINTS" id="PR00257">
    <property type="entry name" value="PHOTSYSPSAAB"/>
</dbReference>
<dbReference type="SUPFAM" id="SSF81558">
    <property type="entry name" value="Photosystem I subunits PsaA/PsaB"/>
    <property type="match status" value="1"/>
</dbReference>
<dbReference type="PROSITE" id="PS00419">
    <property type="entry name" value="PHOTOSYSTEM_I_PSAAB"/>
    <property type="match status" value="1"/>
</dbReference>
<keyword id="KW-0004">4Fe-4S</keyword>
<keyword id="KW-0148">Chlorophyll</keyword>
<keyword id="KW-0150">Chloroplast</keyword>
<keyword id="KW-0157">Chromophore</keyword>
<keyword id="KW-0249">Electron transport</keyword>
<keyword id="KW-0408">Iron</keyword>
<keyword id="KW-0411">Iron-sulfur</keyword>
<keyword id="KW-0460">Magnesium</keyword>
<keyword id="KW-0472">Membrane</keyword>
<keyword id="KW-0479">Metal-binding</keyword>
<keyword id="KW-0560">Oxidoreductase</keyword>
<keyword id="KW-0602">Photosynthesis</keyword>
<keyword id="KW-0603">Photosystem I</keyword>
<keyword id="KW-0934">Plastid</keyword>
<keyword id="KW-0793">Thylakoid</keyword>
<keyword id="KW-0812">Transmembrane</keyword>
<keyword id="KW-1133">Transmembrane helix</keyword>
<keyword id="KW-0813">Transport</keyword>
<comment type="function">
    <text evidence="1">PsaA and PsaB bind P700, the primary electron donor of photosystem I (PSI), as well as the electron acceptors A0, A1 and FX. PSI is a plastocyanin-ferredoxin oxidoreductase, converting photonic excitation into a charge separation, which transfers an electron from the donor P700 chlorophyll pair to the spectroscopically characterized acceptors A0, A1, FX, FA and FB in turn. Oxidized P700 is reduced on the lumenal side of the thylakoid membrane by plastocyanin.</text>
</comment>
<comment type="catalytic activity">
    <reaction evidence="1">
        <text>reduced [plastocyanin] + hnu + oxidized [2Fe-2S]-[ferredoxin] = oxidized [plastocyanin] + reduced [2Fe-2S]-[ferredoxin]</text>
        <dbReference type="Rhea" id="RHEA:30407"/>
        <dbReference type="Rhea" id="RHEA-COMP:10000"/>
        <dbReference type="Rhea" id="RHEA-COMP:10001"/>
        <dbReference type="Rhea" id="RHEA-COMP:10039"/>
        <dbReference type="Rhea" id="RHEA-COMP:10040"/>
        <dbReference type="ChEBI" id="CHEBI:29036"/>
        <dbReference type="ChEBI" id="CHEBI:30212"/>
        <dbReference type="ChEBI" id="CHEBI:33737"/>
        <dbReference type="ChEBI" id="CHEBI:33738"/>
        <dbReference type="ChEBI" id="CHEBI:49552"/>
        <dbReference type="EC" id="1.97.1.12"/>
    </reaction>
</comment>
<comment type="cofactor">
    <text evidence="1">P700 is a chlorophyll a/chlorophyll a' dimer, A0 is one or more chlorophyll a, A1 is one or both phylloquinones and FX is a shared 4Fe-4S iron-sulfur center.</text>
</comment>
<comment type="subunit">
    <text evidence="1">The PsaA/B heterodimer binds the P700 chlorophyll special pair and subsequent electron acceptors. PSI consists of a core antenna complex that captures photons, and an electron transfer chain that converts photonic excitation into a charge separation. The eukaryotic PSI reaction center is composed of at least 11 subunits.</text>
</comment>
<comment type="subcellular location">
    <subcellularLocation>
        <location evidence="1">Plastid</location>
        <location evidence="1">Chloroplast thylakoid membrane</location>
        <topology evidence="1">Multi-pass membrane protein</topology>
    </subcellularLocation>
</comment>
<comment type="similarity">
    <text evidence="1">Belongs to the PsaA/PsaB family.</text>
</comment>
<evidence type="ECO:0000255" key="1">
    <source>
        <dbReference type="HAMAP-Rule" id="MF_00482"/>
    </source>
</evidence>
<gene>
    <name evidence="1" type="primary">psaB</name>
</gene>